<reference key="1">
    <citation type="journal article" date="2009" name="Nature">
        <title>Evolution of pathogenicity and sexual reproduction in eight Candida genomes.</title>
        <authorList>
            <person name="Butler G."/>
            <person name="Rasmussen M.D."/>
            <person name="Lin M.F."/>
            <person name="Santos M.A.S."/>
            <person name="Sakthikumar S."/>
            <person name="Munro C.A."/>
            <person name="Rheinbay E."/>
            <person name="Grabherr M."/>
            <person name="Forche A."/>
            <person name="Reedy J.L."/>
            <person name="Agrafioti I."/>
            <person name="Arnaud M.B."/>
            <person name="Bates S."/>
            <person name="Brown A.J.P."/>
            <person name="Brunke S."/>
            <person name="Costanzo M.C."/>
            <person name="Fitzpatrick D.A."/>
            <person name="de Groot P.W.J."/>
            <person name="Harris D."/>
            <person name="Hoyer L.L."/>
            <person name="Hube B."/>
            <person name="Klis F.M."/>
            <person name="Kodira C."/>
            <person name="Lennard N."/>
            <person name="Logue M.E."/>
            <person name="Martin R."/>
            <person name="Neiman A.M."/>
            <person name="Nikolaou E."/>
            <person name="Quail M.A."/>
            <person name="Quinn J."/>
            <person name="Santos M.C."/>
            <person name="Schmitzberger F.F."/>
            <person name="Sherlock G."/>
            <person name="Shah P."/>
            <person name="Silverstein K.A.T."/>
            <person name="Skrzypek M.S."/>
            <person name="Soll D."/>
            <person name="Staggs R."/>
            <person name="Stansfield I."/>
            <person name="Stumpf M.P.H."/>
            <person name="Sudbery P.E."/>
            <person name="Srikantha T."/>
            <person name="Zeng Q."/>
            <person name="Berman J."/>
            <person name="Berriman M."/>
            <person name="Heitman J."/>
            <person name="Gow N.A.R."/>
            <person name="Lorenz M.C."/>
            <person name="Birren B.W."/>
            <person name="Kellis M."/>
            <person name="Cuomo C.A."/>
        </authorList>
    </citation>
    <scope>NUCLEOTIDE SEQUENCE [LARGE SCALE GENOMIC DNA]</scope>
    <source>
        <strain>ATCC MYA-3404 / T1</strain>
    </source>
</reference>
<dbReference type="EC" id="6.3.5.-" evidence="1"/>
<dbReference type="EMBL" id="GG692396">
    <property type="protein sequence ID" value="EER35016.1"/>
    <property type="molecule type" value="Genomic_DNA"/>
</dbReference>
<dbReference type="RefSeq" id="XP_002547571.1">
    <property type="nucleotide sequence ID" value="XM_002547525.1"/>
</dbReference>
<dbReference type="SMR" id="C5M7P6"/>
<dbReference type="STRING" id="294747.C5M7P6"/>
<dbReference type="EnsemblFungi" id="CTRG_01878-t43_1">
    <property type="protein sequence ID" value="CTRG_01878-t43_1-p1"/>
    <property type="gene ID" value="CTRG_01878"/>
</dbReference>
<dbReference type="GeneID" id="8300142"/>
<dbReference type="KEGG" id="ctp:CTRG_01878"/>
<dbReference type="VEuPathDB" id="FungiDB:CTRG_01878"/>
<dbReference type="eggNOG" id="ENOG502RK44">
    <property type="taxonomic scope" value="Eukaryota"/>
</dbReference>
<dbReference type="HOGENOM" id="CLU_127195_0_0_1"/>
<dbReference type="OrthoDB" id="4024285at2759"/>
<dbReference type="Proteomes" id="UP000002037">
    <property type="component" value="Unassembled WGS sequence"/>
</dbReference>
<dbReference type="GO" id="GO:0030956">
    <property type="term" value="C:glutamyl-tRNA(Gln) amidotransferase complex"/>
    <property type="evidence" value="ECO:0007669"/>
    <property type="project" value="UniProtKB-UniRule"/>
</dbReference>
<dbReference type="GO" id="GO:0005743">
    <property type="term" value="C:mitochondrial inner membrane"/>
    <property type="evidence" value="ECO:0007669"/>
    <property type="project" value="UniProtKB-SubCell"/>
</dbReference>
<dbReference type="GO" id="GO:0005524">
    <property type="term" value="F:ATP binding"/>
    <property type="evidence" value="ECO:0007669"/>
    <property type="project" value="UniProtKB-KW"/>
</dbReference>
<dbReference type="GO" id="GO:0050567">
    <property type="term" value="F:glutaminyl-tRNA synthase (glutamine-hydrolyzing) activity"/>
    <property type="evidence" value="ECO:0007669"/>
    <property type="project" value="UniProtKB-UniRule"/>
</dbReference>
<dbReference type="GO" id="GO:0070681">
    <property type="term" value="P:glutaminyl-tRNAGln biosynthesis via transamidation"/>
    <property type="evidence" value="ECO:0007669"/>
    <property type="project" value="UniProtKB-UniRule"/>
</dbReference>
<dbReference type="GO" id="GO:0032543">
    <property type="term" value="P:mitochondrial translation"/>
    <property type="evidence" value="ECO:0007669"/>
    <property type="project" value="UniProtKB-UniRule"/>
</dbReference>
<dbReference type="CDD" id="cd21422">
    <property type="entry name" value="GatF"/>
    <property type="match status" value="1"/>
</dbReference>
<dbReference type="HAMAP" id="MF_03151">
    <property type="entry name" value="GatF"/>
    <property type="match status" value="1"/>
</dbReference>
<dbReference type="InterPro" id="IPR027499">
    <property type="entry name" value="GatF"/>
</dbReference>
<dbReference type="Pfam" id="PF20977">
    <property type="entry name" value="GatF"/>
    <property type="match status" value="1"/>
</dbReference>
<comment type="function">
    <text evidence="1">Allows the formation of correctly charged Gln-tRNA(Gln) through the transamidation of misacylated Glu-tRNA(Gln) in the mitochondria. The reaction takes place in the presence of glutamine and ATP through an activated gamma-phospho-Glu-tRNA(Gln). Required for proper protein synthesis within the mitochondrion.</text>
</comment>
<comment type="catalytic activity">
    <reaction evidence="1">
        <text>L-glutamyl-tRNA(Gln) + L-glutamine + ATP + H2O = L-glutaminyl-tRNA(Gln) + L-glutamate + ADP + phosphate + H(+)</text>
        <dbReference type="Rhea" id="RHEA:17521"/>
        <dbReference type="Rhea" id="RHEA-COMP:9681"/>
        <dbReference type="Rhea" id="RHEA-COMP:9684"/>
        <dbReference type="ChEBI" id="CHEBI:15377"/>
        <dbReference type="ChEBI" id="CHEBI:15378"/>
        <dbReference type="ChEBI" id="CHEBI:29985"/>
        <dbReference type="ChEBI" id="CHEBI:30616"/>
        <dbReference type="ChEBI" id="CHEBI:43474"/>
        <dbReference type="ChEBI" id="CHEBI:58359"/>
        <dbReference type="ChEBI" id="CHEBI:78520"/>
        <dbReference type="ChEBI" id="CHEBI:78521"/>
        <dbReference type="ChEBI" id="CHEBI:456216"/>
    </reaction>
</comment>
<comment type="subunit">
    <text evidence="1">Subunit of the heterotrimeric GatFAB amidotransferase (AdT) complex, composed of A, B and F subunits.</text>
</comment>
<comment type="subcellular location">
    <subcellularLocation>
        <location evidence="1">Mitochondrion inner membrane</location>
        <topology evidence="1">Peripheral membrane protein</topology>
        <orientation evidence="1">Matrix side</orientation>
    </subcellularLocation>
</comment>
<comment type="miscellaneous">
    <text evidence="1">This protein may be expected to contain an N-terminal transit peptide but none has been predicted.</text>
</comment>
<comment type="similarity">
    <text evidence="1">Belongs to the GatF family.</text>
</comment>
<feature type="chain" id="PRO_0000413399" description="Glutamyl-tRNA(Gln) amidotransferase subunit F, mitochondrial">
    <location>
        <begin position="1"/>
        <end position="182"/>
    </location>
</feature>
<proteinExistence type="inferred from homology"/>
<name>GATF_CANTT</name>
<protein>
    <recommendedName>
        <fullName evidence="1">Glutamyl-tRNA(Gln) amidotransferase subunit F, mitochondrial</fullName>
        <shortName evidence="1">Glu-AdT subunit F</shortName>
        <ecNumber evidence="1">6.3.5.-</ecNumber>
    </recommendedName>
</protein>
<evidence type="ECO:0000255" key="1">
    <source>
        <dbReference type="HAMAP-Rule" id="MF_03151"/>
    </source>
</evidence>
<accession>C5M7P6</accession>
<keyword id="KW-0067">ATP-binding</keyword>
<keyword id="KW-0436">Ligase</keyword>
<keyword id="KW-0472">Membrane</keyword>
<keyword id="KW-0496">Mitochondrion</keyword>
<keyword id="KW-0999">Mitochondrion inner membrane</keyword>
<keyword id="KW-0547">Nucleotide-binding</keyword>
<keyword id="KW-0648">Protein biosynthesis</keyword>
<keyword id="KW-1185">Reference proteome</keyword>
<gene>
    <name evidence="1" type="primary">GTF1</name>
    <name type="ORF">CTRG_01878</name>
</gene>
<organism>
    <name type="scientific">Candida tropicalis (strain ATCC MYA-3404 / T1)</name>
    <name type="common">Yeast</name>
    <dbReference type="NCBI Taxonomy" id="294747"/>
    <lineage>
        <taxon>Eukaryota</taxon>
        <taxon>Fungi</taxon>
        <taxon>Dikarya</taxon>
        <taxon>Ascomycota</taxon>
        <taxon>Saccharomycotina</taxon>
        <taxon>Pichiomycetes</taxon>
        <taxon>Debaryomycetaceae</taxon>
        <taxon>Candida/Lodderomyces clade</taxon>
        <taxon>Candida</taxon>
    </lineage>
</organism>
<sequence length="182" mass="21136">MSKKKEKKFQESKISTRSYRSTTMLRHQIRRITTANRLLDELKTSKDIEKFLNNSTWSIKELLQQPLTNTTTKEVSSDVVTKMLKLSGLSDSQDIQNIRKSLNLQMMFINHLYDKSGNNAEKKVNDNNCMFRLLASDHIPQRPLDLDTLMDEINKLEPSEEKGEIGFGIKDLQRDSFVINKK</sequence>